<keyword id="KW-0002">3D-structure</keyword>
<keyword id="KW-0025">Alternative splicing</keyword>
<keyword id="KW-0238">DNA-binding</keyword>
<keyword id="KW-1017">Isopeptide bond</keyword>
<keyword id="KW-0517">Myogenesis</keyword>
<keyword id="KW-0539">Nucleus</keyword>
<keyword id="KW-0597">Phosphoprotein</keyword>
<keyword id="KW-1267">Proteomics identification</keyword>
<keyword id="KW-1185">Reference proteome</keyword>
<keyword id="KW-0804">Transcription</keyword>
<keyword id="KW-0805">Transcription regulation</keyword>
<keyword id="KW-0832">Ubl conjugation</keyword>
<comment type="function">
    <text evidence="1">Adapter protein linking the transcription factors PAX3 and PAX7 to the histone methylation machinery and involved in myogenesis. Associates with a histone methyltransferase complex that specifically mediates dimethylation and trimethylation of 'Lys-4' of histone H3. Mediates the recruitment of that complex to the transcription factors PAX3 and PAX7 on chromatin to regulate the expression of genes involved in muscle progenitor cells proliferation including ID3 and CDC20.</text>
</comment>
<comment type="subunit">
    <text evidence="1">Interacts with PAX3 and PAX7. Interacts with WDR5; associates with a histone methyltransferase (HMT) complex composed at least of RBBP5, ASH2L, SET1, SET2 and KMT2A/MLL1, KMT2D/MLL2, KMT2C/MLL3 and KMT2B/MLL4 through direct interaction with WDR5.</text>
</comment>
<comment type="subcellular location">
    <subcellularLocation>
        <location evidence="1">Nucleus</location>
    </subcellularLocation>
</comment>
<comment type="alternative products">
    <event type="alternative splicing"/>
    <isoform>
        <id>Q9Y5B6-1</id>
        <name>1</name>
        <name>A</name>
        <sequence type="displayed"/>
    </isoform>
    <isoform>
        <id>Q9Y5B6-2</id>
        <name>2</name>
        <name>B</name>
        <sequence type="described" ref="VSP_004267"/>
    </isoform>
    <isoform>
        <id>Q9Y5B6-3</id>
        <name>3</name>
        <name>C</name>
        <sequence type="described" ref="VSP_004263 VSP_004264"/>
    </isoform>
    <isoform>
        <id>Q9Y5B6-4</id>
        <name>4</name>
        <name>D</name>
        <sequence type="described" ref="VSP_004265 VSP_004266"/>
    </isoform>
</comment>
<comment type="tissue specificity">
    <text evidence="3">Ubiquitous.</text>
</comment>
<comment type="miscellaneous">
    <molecule>Isoform 4</molecule>
    <text evidence="8">Most abundantly expressed isoform, at mRNA level according to PubMed:11707072, despite the presence of a premature stop codon in the mRNA that may lead to nonsense-mediated mRNA decay.</text>
</comment>
<comment type="similarity">
    <text evidence="8">Belongs to the GCF family.</text>
</comment>
<comment type="sequence caution" evidence="8">
    <conflict type="miscellaneous discrepancy">
        <sequence resource="EMBL-CDS" id="AAD34617"/>
    </conflict>
    <text>Contaminating sequence. Sequence of unknown origin in the N-terminal part.</text>
</comment>
<proteinExistence type="evidence at protein level"/>
<organism>
    <name type="scientific">Homo sapiens</name>
    <name type="common">Human</name>
    <dbReference type="NCBI Taxonomy" id="9606"/>
    <lineage>
        <taxon>Eukaryota</taxon>
        <taxon>Metazoa</taxon>
        <taxon>Chordata</taxon>
        <taxon>Craniata</taxon>
        <taxon>Vertebrata</taxon>
        <taxon>Euteleostomi</taxon>
        <taxon>Mammalia</taxon>
        <taxon>Eutheria</taxon>
        <taxon>Euarchontoglires</taxon>
        <taxon>Primates</taxon>
        <taxon>Haplorrhini</taxon>
        <taxon>Catarrhini</taxon>
        <taxon>Hominidae</taxon>
        <taxon>Homo</taxon>
    </lineage>
</organism>
<feature type="chain" id="PRO_0000087439" description="PAX3- and PAX7-binding protein 1">
    <location>
        <begin position="1"/>
        <end position="917"/>
    </location>
</feature>
<feature type="region of interest" description="Disordered" evidence="2">
    <location>
        <begin position="1"/>
        <end position="123"/>
    </location>
</feature>
<feature type="region of interest" description="Disordered" evidence="2">
    <location>
        <begin position="143"/>
        <end position="205"/>
    </location>
</feature>
<feature type="region of interest" description="Disordered" evidence="2">
    <location>
        <begin position="229"/>
        <end position="275"/>
    </location>
</feature>
<feature type="region of interest" description="Disordered" evidence="2">
    <location>
        <begin position="362"/>
        <end position="381"/>
    </location>
</feature>
<feature type="region of interest" description="Necessary and sufficient for interaction with PAX7" evidence="1">
    <location>
        <begin position="378"/>
        <end position="558"/>
    </location>
</feature>
<feature type="region of interest" description="Disordered" evidence="2">
    <location>
        <begin position="530"/>
        <end position="564"/>
    </location>
</feature>
<feature type="compositionally biased region" description="Basic residues" evidence="2">
    <location>
        <begin position="1"/>
        <end position="11"/>
    </location>
</feature>
<feature type="compositionally biased region" description="Acidic residues" evidence="2">
    <location>
        <begin position="16"/>
        <end position="28"/>
    </location>
</feature>
<feature type="compositionally biased region" description="Gly residues" evidence="2">
    <location>
        <begin position="40"/>
        <end position="50"/>
    </location>
</feature>
<feature type="compositionally biased region" description="Gly residues" evidence="2">
    <location>
        <begin position="73"/>
        <end position="85"/>
    </location>
</feature>
<feature type="compositionally biased region" description="Basic and acidic residues" evidence="2">
    <location>
        <begin position="161"/>
        <end position="172"/>
    </location>
</feature>
<feature type="compositionally biased region" description="Acidic residues" evidence="2">
    <location>
        <begin position="183"/>
        <end position="193"/>
    </location>
</feature>
<feature type="compositionally biased region" description="Basic and acidic residues" evidence="2">
    <location>
        <begin position="234"/>
        <end position="256"/>
    </location>
</feature>
<feature type="compositionally biased region" description="Acidic residues" evidence="2">
    <location>
        <begin position="257"/>
        <end position="268"/>
    </location>
</feature>
<feature type="compositionally biased region" description="Basic and acidic residues" evidence="2">
    <location>
        <begin position="542"/>
        <end position="554"/>
    </location>
</feature>
<feature type="modified residue" description="Phosphoserine" evidence="9 13 14">
    <location>
        <position position="16"/>
    </location>
</feature>
<feature type="modified residue" description="Phosphoserine" evidence="11 13 14 15">
    <location>
        <position position="154"/>
    </location>
</feature>
<feature type="modified residue" description="Phosphoserine" evidence="11 13 14 15">
    <location>
        <position position="155"/>
    </location>
</feature>
<feature type="modified residue" description="Phosphoserine" evidence="11 13">
    <location>
        <position position="158"/>
    </location>
</feature>
<feature type="modified residue" description="Phosphoserine" evidence="15">
    <location>
        <position position="191"/>
    </location>
</feature>
<feature type="modified residue" description="Phosphoserine" evidence="10 13 14 15 16">
    <location>
        <position position="262"/>
    </location>
</feature>
<feature type="modified residue" description="Phosphoserine" evidence="12 13">
    <location>
        <position position="295"/>
    </location>
</feature>
<feature type="modified residue" description="Phosphoserine" evidence="11 12 13 14 15">
    <location>
        <position position="557"/>
    </location>
</feature>
<feature type="modified residue" description="Phosphoserine" evidence="11 12 13 14 15">
    <location>
        <position position="558"/>
    </location>
</feature>
<feature type="modified residue" description="Phosphothreonine" evidence="1">
    <location>
        <position position="563"/>
    </location>
</feature>
<feature type="cross-link" description="Glycyl lysine isopeptide (Lys-Gly) (interchain with G-Cter in SUMO1); alternate" evidence="17">
    <location>
        <position position="149"/>
    </location>
</feature>
<feature type="cross-link" description="Glycyl lysine isopeptide (Lys-Gly) (interchain with G-Cter in SUMO2); alternate" evidence="18 19">
    <location>
        <position position="149"/>
    </location>
</feature>
<feature type="splice variant" id="VSP_004263" description="In isoform 3." evidence="5">
    <original>VPLINELE</original>
    <variation>SVQFRKLL</variation>
    <location>
        <begin position="462"/>
        <end position="469"/>
    </location>
</feature>
<feature type="splice variant" id="VSP_004264" description="In isoform 3." evidence="5">
    <location>
        <begin position="470"/>
        <end position="917"/>
    </location>
</feature>
<feature type="splice variant" id="VSP_004265" description="In isoform 4." evidence="5 6">
    <original>NKALMAPNL</original>
    <variation>SQSILKTKL</variation>
    <location>
        <begin position="503"/>
        <end position="511"/>
    </location>
</feature>
<feature type="splice variant" id="VSP_004266" description="In isoform 4." evidence="5 6">
    <location>
        <begin position="512"/>
        <end position="917"/>
    </location>
</feature>
<feature type="splice variant" id="VSP_004267" description="In isoform 2." evidence="5 7">
    <original>LLGNFLQWYGIFSNKTLQELSIDGLLNRYILMAFQNSEYGDDSIKKAQNVINCFPKQWFMNLKGERTISQLENFCRYLVHLADTIYRNSIGCSDVEKRNARENIKQIVKLLASVRALDHAMSVASDHNVKEFKSLIEGK</original>
    <variation>VIKPPFQRGSCPIPRRKECCSERPRRIWTDRPCVVFS</variation>
    <location>
        <begin position="779"/>
        <end position="917"/>
    </location>
</feature>
<feature type="sequence variant" id="VAR_079417" description="Found in a family with global developmental delay and myopathic hypotonia; uncertain significance; dbSNP:rs1569159832." evidence="4">
    <original>R</original>
    <variation>C</variation>
    <location>
        <position position="538"/>
    </location>
</feature>
<feature type="sequence conflict" description="In Ref. 5; AAD34617." evidence="8" ref="5">
    <location>
        <begin position="692"/>
        <end position="711"/>
    </location>
</feature>
<reference key="1">
    <citation type="journal article" date="2001" name="Genomics">
        <title>From PREDs and open reading frames to cDNA isolation: revisiting the human chromosome 21 transcription map.</title>
        <authorList>
            <person name="Reymond A."/>
            <person name="Friedli M."/>
            <person name="Neergaard Henrichsen C."/>
            <person name="Chapot F."/>
            <person name="Deutsch S."/>
            <person name="Ucla C."/>
            <person name="Rossier C."/>
            <person name="Lyle R."/>
            <person name="Guipponi M."/>
            <person name="Antonarakis S.E."/>
        </authorList>
    </citation>
    <scope>NUCLEOTIDE SEQUENCE [MRNA] (ISOFORMS 1; 2; 3 AND 4)</scope>
    <scope>TISSUE SPECIFICITY</scope>
</reference>
<reference key="2">
    <citation type="submission" date="2000-09" db="EMBL/GenBank/DDBJ databases">
        <title>Isolation and initial characterization of a putative human chromosome 21 transcription factor.</title>
        <authorList>
            <person name="Chapot-Skovsgaard F.M."/>
            <person name="Guipponi M."/>
            <person name="Lyle R."/>
            <person name="Antonarakis S.E."/>
        </authorList>
    </citation>
    <scope>NUCLEOTIDE SEQUENCE [MRNA] (ISOFORMS 1 AND 4)</scope>
    <source>
        <tissue>Brain</tissue>
        <tissue>Heart</tissue>
        <tissue>Kidney</tissue>
        <tissue>Lung</tissue>
        <tissue>Muscle</tissue>
        <tissue>Placenta</tissue>
        <tissue>Testis</tissue>
    </source>
</reference>
<reference key="3">
    <citation type="submission" date="2005-09" db="EMBL/GenBank/DDBJ databases">
        <authorList>
            <person name="Mural R.J."/>
            <person name="Istrail S."/>
            <person name="Sutton G.G."/>
            <person name="Florea L."/>
            <person name="Halpern A.L."/>
            <person name="Mobarry C.M."/>
            <person name="Lippert R."/>
            <person name="Walenz B."/>
            <person name="Shatkay H."/>
            <person name="Dew I."/>
            <person name="Miller J.R."/>
            <person name="Flanigan M.J."/>
            <person name="Edwards N.J."/>
            <person name="Bolanos R."/>
            <person name="Fasulo D."/>
            <person name="Halldorsson B.V."/>
            <person name="Hannenhalli S."/>
            <person name="Turner R."/>
            <person name="Yooseph S."/>
            <person name="Lu F."/>
            <person name="Nusskern D.R."/>
            <person name="Shue B.C."/>
            <person name="Zheng X.H."/>
            <person name="Zhong F."/>
            <person name="Delcher A.L."/>
            <person name="Huson D.H."/>
            <person name="Kravitz S.A."/>
            <person name="Mouchard L."/>
            <person name="Reinert K."/>
            <person name="Remington K.A."/>
            <person name="Clark A.G."/>
            <person name="Waterman M.S."/>
            <person name="Eichler E.E."/>
            <person name="Adams M.D."/>
            <person name="Hunkapiller M.W."/>
            <person name="Myers E.W."/>
            <person name="Venter J.C."/>
        </authorList>
    </citation>
    <scope>NUCLEOTIDE SEQUENCE [LARGE SCALE GENOMIC DNA]</scope>
</reference>
<reference key="4">
    <citation type="journal article" date="2000" name="Gene">
        <title>Criteria for gene identification and features of genome organization: analysis of 6.5 Mb of DNA sequence from human chromosome 21.</title>
        <authorList>
            <person name="Slavov D."/>
            <person name="Hattori M."/>
            <person name="Sakaki Y."/>
            <person name="Rosenthal A."/>
            <person name="Shimizu N."/>
            <person name="Minoshima S."/>
            <person name="Kudoh J."/>
            <person name="Yaspo M.-L."/>
            <person name="Ramser J."/>
            <person name="Reinhardt R."/>
            <person name="Reimer C."/>
            <person name="Clancy K."/>
            <person name="Rynditch A."/>
            <person name="Gardiner K."/>
        </authorList>
    </citation>
    <scope>NUCLEOTIDE SEQUENCE [MRNA] OF 132-917 (ISOFORM 1)</scope>
</reference>
<reference key="5">
    <citation type="submission" date="1999-05" db="EMBL/GenBank/DDBJ databases">
        <title>Cloning of candidate of GC-rich sequence DNA-binding factor.</title>
        <authorList>
            <person name="Teramoto T."/>
            <person name="Thorgeirsson S.S."/>
        </authorList>
    </citation>
    <scope>NUCLEOTIDE SEQUENCE [MRNA] OF 489-815 (ISOFORM 2)</scope>
</reference>
<reference key="6">
    <citation type="journal article" date="2006" name="Cell">
        <title>Global, in vivo, and site-specific phosphorylation dynamics in signaling networks.</title>
        <authorList>
            <person name="Olsen J.V."/>
            <person name="Blagoev B."/>
            <person name="Gnad F."/>
            <person name="Macek B."/>
            <person name="Kumar C."/>
            <person name="Mortensen P."/>
            <person name="Mann M."/>
        </authorList>
    </citation>
    <scope>PHOSPHORYLATION [LARGE SCALE ANALYSIS] AT SER-16</scope>
    <scope>IDENTIFICATION BY MASS SPECTROMETRY [LARGE SCALE ANALYSIS]</scope>
    <source>
        <tissue>Cervix carcinoma</tissue>
    </source>
</reference>
<reference key="7">
    <citation type="journal article" date="2008" name="Proc. Natl. Acad. Sci. U.S.A.">
        <title>A quantitative atlas of mitotic phosphorylation.</title>
        <authorList>
            <person name="Dephoure N."/>
            <person name="Zhou C."/>
            <person name="Villen J."/>
            <person name="Beausoleil S.A."/>
            <person name="Bakalarski C.E."/>
            <person name="Elledge S.J."/>
            <person name="Gygi S.P."/>
        </authorList>
    </citation>
    <scope>PHOSPHORYLATION [LARGE SCALE ANALYSIS] AT SER-154; SER-155; SER-158; SER-557 AND SER-558</scope>
    <scope>IDENTIFICATION BY MASS SPECTROMETRY [LARGE SCALE ANALYSIS]</scope>
    <source>
        <tissue>Cervix carcinoma</tissue>
    </source>
</reference>
<reference key="8">
    <citation type="journal article" date="2008" name="Proteomics">
        <title>Large-scale phosphoproteome analysis of human liver tissue by enrichment and fractionation of phosphopeptides with strong anion exchange chromatography.</title>
        <authorList>
            <person name="Han G."/>
            <person name="Ye M."/>
            <person name="Zhou H."/>
            <person name="Jiang X."/>
            <person name="Feng S."/>
            <person name="Jiang X."/>
            <person name="Tian R."/>
            <person name="Wan D."/>
            <person name="Zou H."/>
            <person name="Gu J."/>
        </authorList>
    </citation>
    <scope>PHOSPHORYLATION [LARGE SCALE ANALYSIS] AT SER-262</scope>
    <scope>IDENTIFICATION BY MASS SPECTROMETRY [LARGE SCALE ANALYSIS]</scope>
    <source>
        <tissue>Liver</tissue>
    </source>
</reference>
<reference key="9">
    <citation type="journal article" date="2009" name="Anal. Chem.">
        <title>Lys-N and trypsin cover complementary parts of the phosphoproteome in a refined SCX-based approach.</title>
        <authorList>
            <person name="Gauci S."/>
            <person name="Helbig A.O."/>
            <person name="Slijper M."/>
            <person name="Krijgsveld J."/>
            <person name="Heck A.J."/>
            <person name="Mohammed S."/>
        </authorList>
    </citation>
    <scope>IDENTIFICATION BY MASS SPECTROMETRY [LARGE SCALE ANALYSIS]</scope>
</reference>
<reference key="10">
    <citation type="journal article" date="2009" name="Sci. Signal.">
        <title>Quantitative phosphoproteomic analysis of T cell receptor signaling reveals system-wide modulation of protein-protein interactions.</title>
        <authorList>
            <person name="Mayya V."/>
            <person name="Lundgren D.H."/>
            <person name="Hwang S.-I."/>
            <person name="Rezaul K."/>
            <person name="Wu L."/>
            <person name="Eng J.K."/>
            <person name="Rodionov V."/>
            <person name="Han D.K."/>
        </authorList>
    </citation>
    <scope>PHOSPHORYLATION [LARGE SCALE ANALYSIS] AT SER-295; SER-557 AND SER-558</scope>
    <scope>IDENTIFICATION BY MASS SPECTROMETRY [LARGE SCALE ANALYSIS]</scope>
    <source>
        <tissue>Leukemic T-cell</tissue>
    </source>
</reference>
<reference key="11">
    <citation type="journal article" date="2009" name="Science">
        <title>Lysine acetylation targets protein complexes and co-regulates major cellular functions.</title>
        <authorList>
            <person name="Choudhary C."/>
            <person name="Kumar C."/>
            <person name="Gnad F."/>
            <person name="Nielsen M.L."/>
            <person name="Rehman M."/>
            <person name="Walther T.C."/>
            <person name="Olsen J.V."/>
            <person name="Mann M."/>
        </authorList>
    </citation>
    <scope>IDENTIFICATION BY MASS SPECTROMETRY [LARGE SCALE ANALYSIS]</scope>
</reference>
<reference key="12">
    <citation type="journal article" date="2010" name="Sci. Signal.">
        <title>Quantitative phosphoproteomics reveals widespread full phosphorylation site occupancy during mitosis.</title>
        <authorList>
            <person name="Olsen J.V."/>
            <person name="Vermeulen M."/>
            <person name="Santamaria A."/>
            <person name="Kumar C."/>
            <person name="Miller M.L."/>
            <person name="Jensen L.J."/>
            <person name="Gnad F."/>
            <person name="Cox J."/>
            <person name="Jensen T.S."/>
            <person name="Nigg E.A."/>
            <person name="Brunak S."/>
            <person name="Mann M."/>
        </authorList>
    </citation>
    <scope>PHOSPHORYLATION [LARGE SCALE ANALYSIS] AT SER-16; SER-154; SER-155; SER-158; SER-262; SER-295; SER-557 AND SER-558</scope>
    <scope>IDENTIFICATION BY MASS SPECTROMETRY [LARGE SCALE ANALYSIS]</scope>
    <source>
        <tissue>Cervix carcinoma</tissue>
    </source>
</reference>
<reference key="13">
    <citation type="journal article" date="2011" name="BMC Syst. Biol.">
        <title>Initial characterization of the human central proteome.</title>
        <authorList>
            <person name="Burkard T.R."/>
            <person name="Planyavsky M."/>
            <person name="Kaupe I."/>
            <person name="Breitwieser F.P."/>
            <person name="Buerckstuemmer T."/>
            <person name="Bennett K.L."/>
            <person name="Superti-Furga G."/>
            <person name="Colinge J."/>
        </authorList>
    </citation>
    <scope>IDENTIFICATION BY MASS SPECTROMETRY [LARGE SCALE ANALYSIS]</scope>
</reference>
<reference key="14">
    <citation type="journal article" date="2011" name="Sci. Signal.">
        <title>System-wide temporal characterization of the proteome and phosphoproteome of human embryonic stem cell differentiation.</title>
        <authorList>
            <person name="Rigbolt K.T."/>
            <person name="Prokhorova T.A."/>
            <person name="Akimov V."/>
            <person name="Henningsen J."/>
            <person name="Johansen P.T."/>
            <person name="Kratchmarova I."/>
            <person name="Kassem M."/>
            <person name="Mann M."/>
            <person name="Olsen J.V."/>
            <person name="Blagoev B."/>
        </authorList>
    </citation>
    <scope>PHOSPHORYLATION [LARGE SCALE ANALYSIS] AT SER-16; SER-154; SER-155; SER-262; SER-557 AND SER-558</scope>
    <scope>IDENTIFICATION BY MASS SPECTROMETRY [LARGE SCALE ANALYSIS]</scope>
</reference>
<reference key="15">
    <citation type="journal article" date="2013" name="J. Proteome Res.">
        <title>Toward a comprehensive characterization of a human cancer cell phosphoproteome.</title>
        <authorList>
            <person name="Zhou H."/>
            <person name="Di Palma S."/>
            <person name="Preisinger C."/>
            <person name="Peng M."/>
            <person name="Polat A.N."/>
            <person name="Heck A.J."/>
            <person name="Mohammed S."/>
        </authorList>
    </citation>
    <scope>PHOSPHORYLATION [LARGE SCALE ANALYSIS] AT SER-154; SER-155; SER-191; SER-262; SER-557 AND SER-558</scope>
    <scope>IDENTIFICATION BY MASS SPECTROMETRY [LARGE SCALE ANALYSIS]</scope>
    <source>
        <tissue>Cervix carcinoma</tissue>
        <tissue>Erythroleukemia</tissue>
    </source>
</reference>
<reference key="16">
    <citation type="journal article" date="2014" name="J. Proteomics">
        <title>An enzyme assisted RP-RPLC approach for in-depth analysis of human liver phosphoproteome.</title>
        <authorList>
            <person name="Bian Y."/>
            <person name="Song C."/>
            <person name="Cheng K."/>
            <person name="Dong M."/>
            <person name="Wang F."/>
            <person name="Huang J."/>
            <person name="Sun D."/>
            <person name="Wang L."/>
            <person name="Ye M."/>
            <person name="Zou H."/>
        </authorList>
    </citation>
    <scope>PHOSPHORYLATION [LARGE SCALE ANALYSIS] AT SER-262</scope>
    <scope>IDENTIFICATION BY MASS SPECTROMETRY [LARGE SCALE ANALYSIS]</scope>
    <source>
        <tissue>Liver</tissue>
    </source>
</reference>
<reference key="17">
    <citation type="journal article" date="2014" name="Nat. Struct. Mol. Biol.">
        <title>Uncovering global SUMOylation signaling networks in a site-specific manner.</title>
        <authorList>
            <person name="Hendriks I.A."/>
            <person name="D'Souza R.C."/>
            <person name="Yang B."/>
            <person name="Verlaan-de Vries M."/>
            <person name="Mann M."/>
            <person name="Vertegaal A.C."/>
        </authorList>
    </citation>
    <scope>SUMOYLATION [LARGE SCALE ANALYSIS] AT LYS-149</scope>
    <scope>IDENTIFICATION BY MASS SPECTROMETRY [LARGE SCALE ANALYSIS]</scope>
</reference>
<reference key="18">
    <citation type="journal article" date="2014" name="Proc. Natl. Acad. Sci. U.S.A.">
        <title>Mapping of SUMO sites and analysis of SUMOylation changes induced by external stimuli.</title>
        <authorList>
            <person name="Impens F."/>
            <person name="Radoshevich L."/>
            <person name="Cossart P."/>
            <person name="Ribet D."/>
        </authorList>
    </citation>
    <scope>SUMOYLATION [LARGE SCALE ANALYSIS] AT LYS-149</scope>
    <scope>IDENTIFICATION BY MASS SPECTROMETRY [LARGE SCALE ANALYSIS]</scope>
</reference>
<reference key="19">
    <citation type="journal article" date="2017" name="Nat. Struct. Mol. Biol.">
        <title>Site-specific mapping of the human SUMO proteome reveals co-modification with phosphorylation.</title>
        <authorList>
            <person name="Hendriks I.A."/>
            <person name="Lyon D."/>
            <person name="Young C."/>
            <person name="Jensen L.J."/>
            <person name="Vertegaal A.C."/>
            <person name="Nielsen M.L."/>
        </authorList>
    </citation>
    <scope>SUMOYLATION [LARGE SCALE ANALYSIS] AT LYS-149</scope>
    <scope>IDENTIFICATION BY MASS SPECTROMETRY [LARGE SCALE ANALYSIS]</scope>
</reference>
<reference key="20">
    <citation type="journal article" date="2017" name="Clin. Genet.">
        <title>A homozygous potentially pathogenic variant in the PAXBP1 gene in a large family with global developmental delay and myopathic hypotonia.</title>
        <authorList>
            <person name="Alharby E."/>
            <person name="Albalawi A.M."/>
            <person name="Nasir A."/>
            <person name="Alhijji S.A."/>
            <person name="Mahmood A."/>
            <person name="Ramzan K."/>
            <person name="Abdusamad F."/>
            <person name="Aljohani A."/>
            <person name="Abdelsalam O."/>
            <person name="Eldardear A."/>
            <person name="Basit S."/>
        </authorList>
    </citation>
    <scope>VARIANT CYS-538</scope>
</reference>
<accession>Q9Y5B6</accession>
<accession>D3DSE7</accession>
<accession>Q96DU8</accession>
<accession>Q9NYQ0</accession>
<dbReference type="EMBL" id="AY033903">
    <property type="protein sequence ID" value="AAK68721.1"/>
    <property type="molecule type" value="mRNA"/>
</dbReference>
<dbReference type="EMBL" id="AY033904">
    <property type="protein sequence ID" value="AAK68722.1"/>
    <property type="molecule type" value="mRNA"/>
</dbReference>
<dbReference type="EMBL" id="AY033905">
    <property type="protein sequence ID" value="AAK68723.1"/>
    <property type="molecule type" value="mRNA"/>
</dbReference>
<dbReference type="EMBL" id="AY033906">
    <property type="protein sequence ID" value="AAK68724.1"/>
    <property type="molecule type" value="mRNA"/>
</dbReference>
<dbReference type="EMBL" id="AJ279080">
    <property type="protein sequence ID" value="CAC40813.1"/>
    <property type="molecule type" value="mRNA"/>
</dbReference>
<dbReference type="EMBL" id="AJ279081">
    <property type="protein sequence ID" value="CAC40814.1"/>
    <property type="molecule type" value="mRNA"/>
</dbReference>
<dbReference type="EMBL" id="CH471079">
    <property type="protein sequence ID" value="EAX09859.1"/>
    <property type="molecule type" value="Genomic_DNA"/>
</dbReference>
<dbReference type="EMBL" id="CH471079">
    <property type="protein sequence ID" value="EAX09861.1"/>
    <property type="molecule type" value="Genomic_DNA"/>
</dbReference>
<dbReference type="EMBL" id="AF231920">
    <property type="protein sequence ID" value="AAF72944.1"/>
    <property type="molecule type" value="mRNA"/>
</dbReference>
<dbReference type="EMBL" id="AF153208">
    <property type="protein sequence ID" value="AAD34617.1"/>
    <property type="status" value="ALT_SEQ"/>
    <property type="molecule type" value="mRNA"/>
</dbReference>
<dbReference type="CCDS" id="CCDS13619.1">
    <molecule id="Q9Y5B6-1"/>
</dbReference>
<dbReference type="CCDS" id="CCDS33541.1">
    <molecule id="Q9Y5B6-2"/>
</dbReference>
<dbReference type="RefSeq" id="NP_037461.2">
    <molecule id="Q9Y5B6-2"/>
    <property type="nucleotide sequence ID" value="NM_013329.3"/>
</dbReference>
<dbReference type="RefSeq" id="NP_057715.2">
    <molecule id="Q9Y5B6-1"/>
    <property type="nucleotide sequence ID" value="NM_016631.3"/>
</dbReference>
<dbReference type="PDB" id="8RO2">
    <property type="method" value="EM"/>
    <property type="resolution" value="3.50 A"/>
    <property type="chains" value="PX=1-917"/>
</dbReference>
<dbReference type="PDBsum" id="8RO2"/>
<dbReference type="EMDB" id="EMD-19399"/>
<dbReference type="SMR" id="Q9Y5B6"/>
<dbReference type="BioGRID" id="125115">
    <property type="interactions" value="110"/>
</dbReference>
<dbReference type="FunCoup" id="Q9Y5B6">
    <property type="interactions" value="4596"/>
</dbReference>
<dbReference type="IntAct" id="Q9Y5B6">
    <property type="interactions" value="57"/>
</dbReference>
<dbReference type="MINT" id="Q9Y5B6"/>
<dbReference type="STRING" id="9606.ENSP00000328992"/>
<dbReference type="GlyGen" id="Q9Y5B6">
    <property type="glycosylation" value="1 site, 1 O-linked glycan (1 site)"/>
</dbReference>
<dbReference type="iPTMnet" id="Q9Y5B6"/>
<dbReference type="MetOSite" id="Q9Y5B6"/>
<dbReference type="PhosphoSitePlus" id="Q9Y5B6"/>
<dbReference type="SwissPalm" id="Q9Y5B6"/>
<dbReference type="BioMuta" id="PAXBP1"/>
<dbReference type="DMDM" id="20141448"/>
<dbReference type="jPOST" id="Q9Y5B6"/>
<dbReference type="MassIVE" id="Q9Y5B6"/>
<dbReference type="PaxDb" id="9606-ENSP00000328992"/>
<dbReference type="PeptideAtlas" id="Q9Y5B6"/>
<dbReference type="ProteomicsDB" id="86332">
    <molecule id="Q9Y5B6-1"/>
</dbReference>
<dbReference type="ProteomicsDB" id="86333">
    <molecule id="Q9Y5B6-2"/>
</dbReference>
<dbReference type="ProteomicsDB" id="86334">
    <molecule id="Q9Y5B6-3"/>
</dbReference>
<dbReference type="ProteomicsDB" id="86335">
    <molecule id="Q9Y5B6-4"/>
</dbReference>
<dbReference type="Pumba" id="Q9Y5B6"/>
<dbReference type="Antibodypedia" id="22645">
    <property type="antibodies" value="134 antibodies from 23 providers"/>
</dbReference>
<dbReference type="CPTC" id="Q9Y5B6">
    <property type="antibodies" value="2 antibodies"/>
</dbReference>
<dbReference type="DNASU" id="94104"/>
<dbReference type="Ensembl" id="ENST00000290178.4">
    <molecule id="Q9Y5B6-2"/>
    <property type="protein sequence ID" value="ENSP00000290178.4"/>
    <property type="gene ID" value="ENSG00000159086.15"/>
</dbReference>
<dbReference type="Ensembl" id="ENST00000331923.9">
    <molecule id="Q9Y5B6-1"/>
    <property type="protein sequence ID" value="ENSP00000328992.4"/>
    <property type="gene ID" value="ENSG00000159086.15"/>
</dbReference>
<dbReference type="Ensembl" id="ENST00000443785.5">
    <molecule id="Q9Y5B6-4"/>
    <property type="protein sequence ID" value="ENSP00000393038.1"/>
    <property type="gene ID" value="ENSG00000159086.15"/>
</dbReference>
<dbReference type="Ensembl" id="ENST00000573680.5">
    <property type="protein sequence ID" value="ENSP00000458892.2"/>
    <property type="gene ID" value="ENSG00000263141.5"/>
</dbReference>
<dbReference type="Ensembl" id="ENST00000574159.2">
    <property type="protein sequence ID" value="ENSP00000458262.2"/>
    <property type="gene ID" value="ENSG00000263141.5"/>
</dbReference>
<dbReference type="GeneID" id="94104"/>
<dbReference type="KEGG" id="hsa:94104"/>
<dbReference type="MANE-Select" id="ENST00000331923.9">
    <property type="protein sequence ID" value="ENSP00000328992.4"/>
    <property type="RefSeq nucleotide sequence ID" value="NM_016631.4"/>
    <property type="RefSeq protein sequence ID" value="NP_057715.2"/>
</dbReference>
<dbReference type="UCSC" id="uc002yqn.3">
    <molecule id="Q9Y5B6-1"/>
    <property type="organism name" value="human"/>
</dbReference>
<dbReference type="AGR" id="HGNC:13579"/>
<dbReference type="CTD" id="94104"/>
<dbReference type="DisGeNET" id="94104"/>
<dbReference type="GeneCards" id="PAXBP1"/>
<dbReference type="HGNC" id="HGNC:13579">
    <property type="gene designation" value="PAXBP1"/>
</dbReference>
<dbReference type="HPA" id="ENSG00000159086">
    <property type="expression patterns" value="Low tissue specificity"/>
</dbReference>
<dbReference type="MalaCards" id="PAXBP1"/>
<dbReference type="MIM" id="617621">
    <property type="type" value="gene"/>
</dbReference>
<dbReference type="neXtProt" id="NX_Q9Y5B6"/>
<dbReference type="OpenTargets" id="ENSG00000159086"/>
<dbReference type="PharmGKB" id="PA25861"/>
<dbReference type="VEuPathDB" id="HostDB:ENSG00000159086"/>
<dbReference type="eggNOG" id="KOG2136">
    <property type="taxonomic scope" value="Eukaryota"/>
</dbReference>
<dbReference type="GeneTree" id="ENSGT00390000000455"/>
<dbReference type="HOGENOM" id="CLU_010846_3_0_1"/>
<dbReference type="InParanoid" id="Q9Y5B6"/>
<dbReference type="OMA" id="MKNICLW"/>
<dbReference type="OrthoDB" id="429427at2759"/>
<dbReference type="PAN-GO" id="Q9Y5B6">
    <property type="GO annotations" value="2 GO annotations based on evolutionary models"/>
</dbReference>
<dbReference type="PhylomeDB" id="Q9Y5B6"/>
<dbReference type="TreeFam" id="TF315109"/>
<dbReference type="PathwayCommons" id="Q9Y5B6"/>
<dbReference type="SignaLink" id="Q9Y5B6"/>
<dbReference type="BioGRID-ORCS" id="94104">
    <property type="hits" value="553 hits in 1161 CRISPR screens"/>
</dbReference>
<dbReference type="ChiTaRS" id="PAXBP1">
    <property type="organism name" value="human"/>
</dbReference>
<dbReference type="GeneWiki" id="C21orf66"/>
<dbReference type="GenomeRNAi" id="94104"/>
<dbReference type="Pharos" id="Q9Y5B6">
    <property type="development level" value="Tbio"/>
</dbReference>
<dbReference type="PRO" id="PR:Q9Y5B6"/>
<dbReference type="Proteomes" id="UP000005640">
    <property type="component" value="Chromosome 21"/>
</dbReference>
<dbReference type="RNAct" id="Q9Y5B6">
    <property type="molecule type" value="protein"/>
</dbReference>
<dbReference type="Bgee" id="ENSG00000159086">
    <property type="expression patterns" value="Expressed in sural nerve and 200 other cell types or tissues"/>
</dbReference>
<dbReference type="ExpressionAtlas" id="Q9Y5B6">
    <property type="expression patterns" value="baseline and differential"/>
</dbReference>
<dbReference type="GO" id="GO:0005829">
    <property type="term" value="C:cytosol"/>
    <property type="evidence" value="ECO:0007005"/>
    <property type="project" value="UniProtKB"/>
</dbReference>
<dbReference type="GO" id="GO:0005634">
    <property type="term" value="C:nucleus"/>
    <property type="evidence" value="ECO:0000318"/>
    <property type="project" value="GO_Central"/>
</dbReference>
<dbReference type="GO" id="GO:0003677">
    <property type="term" value="F:DNA binding"/>
    <property type="evidence" value="ECO:0007669"/>
    <property type="project" value="UniProtKB-KW"/>
</dbReference>
<dbReference type="GO" id="GO:1990226">
    <property type="term" value="F:histone methyltransferase binding"/>
    <property type="evidence" value="ECO:0007669"/>
    <property type="project" value="Ensembl"/>
</dbReference>
<dbReference type="GO" id="GO:0000398">
    <property type="term" value="P:mRNA splicing, via spliceosome"/>
    <property type="evidence" value="ECO:0007669"/>
    <property type="project" value="InterPro"/>
</dbReference>
<dbReference type="GO" id="GO:0007517">
    <property type="term" value="P:muscle organ development"/>
    <property type="evidence" value="ECO:0007669"/>
    <property type="project" value="UniProtKB-KW"/>
</dbReference>
<dbReference type="GO" id="GO:2000288">
    <property type="term" value="P:positive regulation of myoblast proliferation"/>
    <property type="evidence" value="ECO:0007669"/>
    <property type="project" value="Ensembl"/>
</dbReference>
<dbReference type="GO" id="GO:0045944">
    <property type="term" value="P:positive regulation of transcription by RNA polymerase II"/>
    <property type="evidence" value="ECO:0000318"/>
    <property type="project" value="GO_Central"/>
</dbReference>
<dbReference type="GO" id="GO:0014842">
    <property type="term" value="P:regulation of skeletal muscle satellite cell proliferation"/>
    <property type="evidence" value="ECO:0007669"/>
    <property type="project" value="Ensembl"/>
</dbReference>
<dbReference type="GO" id="GO:0006366">
    <property type="term" value="P:transcription by RNA polymerase II"/>
    <property type="evidence" value="ECO:0007669"/>
    <property type="project" value="Ensembl"/>
</dbReference>
<dbReference type="InterPro" id="IPR012890">
    <property type="entry name" value="GCFC2-like"/>
</dbReference>
<dbReference type="InterPro" id="IPR022783">
    <property type="entry name" value="GCFC_dom"/>
</dbReference>
<dbReference type="PANTHER" id="PTHR12214">
    <property type="entry name" value="GC-RICH SEQUENCE DNA-BINDING FACTOR"/>
    <property type="match status" value="1"/>
</dbReference>
<dbReference type="PANTHER" id="PTHR12214:SF2">
    <property type="entry name" value="PAX3- AND PAX7-BINDING PROTEIN 1"/>
    <property type="match status" value="1"/>
</dbReference>
<dbReference type="Pfam" id="PF07842">
    <property type="entry name" value="GCFC"/>
    <property type="match status" value="1"/>
</dbReference>
<evidence type="ECO:0000250" key="1">
    <source>
        <dbReference type="UniProtKB" id="P58501"/>
    </source>
</evidence>
<evidence type="ECO:0000256" key="2">
    <source>
        <dbReference type="SAM" id="MobiDB-lite"/>
    </source>
</evidence>
<evidence type="ECO:0000269" key="3">
    <source>
    </source>
</evidence>
<evidence type="ECO:0000269" key="4">
    <source>
    </source>
</evidence>
<evidence type="ECO:0000303" key="5">
    <source>
    </source>
</evidence>
<evidence type="ECO:0000303" key="6">
    <source ref="2"/>
</evidence>
<evidence type="ECO:0000303" key="7">
    <source ref="5"/>
</evidence>
<evidence type="ECO:0000305" key="8"/>
<evidence type="ECO:0007744" key="9">
    <source>
    </source>
</evidence>
<evidence type="ECO:0007744" key="10">
    <source>
    </source>
</evidence>
<evidence type="ECO:0007744" key="11">
    <source>
    </source>
</evidence>
<evidence type="ECO:0007744" key="12">
    <source>
    </source>
</evidence>
<evidence type="ECO:0007744" key="13">
    <source>
    </source>
</evidence>
<evidence type="ECO:0007744" key="14">
    <source>
    </source>
</evidence>
<evidence type="ECO:0007744" key="15">
    <source>
    </source>
</evidence>
<evidence type="ECO:0007744" key="16">
    <source>
    </source>
</evidence>
<evidence type="ECO:0007744" key="17">
    <source>
    </source>
</evidence>
<evidence type="ECO:0007744" key="18">
    <source>
    </source>
</evidence>
<evidence type="ECO:0007744" key="19">
    <source>
    </source>
</evidence>
<gene>
    <name type="primary">PAXBP1</name>
    <name type="synonym">C21orf66</name>
    <name type="synonym">GCFC</name>
    <name type="synonym">GCFC1</name>
</gene>
<name>PAXB1_HUMAN</name>
<protein>
    <recommendedName>
        <fullName>PAX3- and PAX7-binding protein 1</fullName>
    </recommendedName>
    <alternativeName>
        <fullName>GC-rich sequence DNA-binding factor 1</fullName>
    </alternativeName>
</protein>
<sequence length="917" mass="104804">MFRKARRVNVRKRNDSEEEERERDEEQEPPPLLPPPGTGEEAGPGGGDRAPGGESLLGPGPSPPSALTPGLGAEAGGGFPGGAEPGNGLKPRKRPRENKEVPRASLLSFQDEEEENEEVFKVKKSSYSKKIVKLLKKEYKEDLEKSKIKTELNSSAESEQPLDKTGHVKDTNQEDGVIISEHGEDEMDMESEKEEEKPKTGGAFSNALSSLNVLRPGEIPDAAFIHAARKKRQMARELGDFTPHDNEPGKGRLVREDENDASDDEDDDEKRRIVFSVKEKSQRQKIAEEIGIEGSDDDALVTGEQDEELSRWEQEQIRKGINIPQVQASQPAEVNMYYQNTYQTMPYGSSYGIPYSYTAYGSSDAKSQKTDNTVPFKTPSNEMTPVTIDLVKKQLKDRLDSMKELHKTNRQQHEKHLQSRVDSTRAIERLEGSSGGIGERYKFLQEMRGYVQDLLECFSEKVPLINELESAIHQLYKQRASRLVQRRQDDIKDESSEFSSHSNKALMAPNLDSFGRDRALYQEHAKRRIAEREARRTRRRQAREQTGKMADHLEGLSSDDEETSTDITNFNLEKDRISKESGKVFEDVLESFYSIDCIKSQFEAWRSKYYTSYKDAYIGLCLPKLFNPLIRLQLLTWTPLEAKCRDFENMLWFESLLFYGCEEREQEKDDVDVALLPTIVEKVILPKLTVIAENMWDPFSTTQTSRMVGITLKLINGYPSVVNAENKNTQVYLKALLLRMRRTLDDDVFMPLYPKNVLENKNSGPYLFFQRQFWSSVKLLGNFLQWYGIFSNKTLQELSIDGLLNRYILMAFQNSEYGDDSIKKAQNVINCFPKQWFMNLKGERTISQLENFCRYLVHLADTIYRNSIGCSDVEKRNARENIKQIVKLLASVRALDHAMSVASDHNVKEFKSLIEGK</sequence>